<reference key="1">
    <citation type="journal article" date="2003" name="Proc. Natl. Acad. Sci. U.S.A.">
        <title>The complete genome sequence of Chromobacterium violaceum reveals remarkable and exploitable bacterial adaptability.</title>
        <authorList>
            <person name="Vasconcelos A.T.R."/>
            <person name="de Almeida D.F."/>
            <person name="Hungria M."/>
            <person name="Guimaraes C.T."/>
            <person name="Antonio R.V."/>
            <person name="Almeida F.C."/>
            <person name="de Almeida L.G.P."/>
            <person name="de Almeida R."/>
            <person name="Alves-Gomes J.A."/>
            <person name="Andrade E.M."/>
            <person name="Araripe J."/>
            <person name="de Araujo M.F.F."/>
            <person name="Astolfi-Filho S."/>
            <person name="Azevedo V."/>
            <person name="Baptista A.J."/>
            <person name="Bataus L.A.M."/>
            <person name="Batista J.S."/>
            <person name="Belo A."/>
            <person name="van den Berg C."/>
            <person name="Bogo M."/>
            <person name="Bonatto S."/>
            <person name="Bordignon J."/>
            <person name="Brigido M.M."/>
            <person name="Brito C.A."/>
            <person name="Brocchi M."/>
            <person name="Burity H.A."/>
            <person name="Camargo A.A."/>
            <person name="Cardoso D.D.P."/>
            <person name="Carneiro N.P."/>
            <person name="Carraro D.M."/>
            <person name="Carvalho C.M.B."/>
            <person name="Cascardo J.C.M."/>
            <person name="Cavada B.S."/>
            <person name="Chueire L.M.O."/>
            <person name="Creczynski-Pasa T.B."/>
            <person name="Cunha-Junior N.C."/>
            <person name="Fagundes N."/>
            <person name="Falcao C.L."/>
            <person name="Fantinatti F."/>
            <person name="Farias I.P."/>
            <person name="Felipe M.S.S."/>
            <person name="Ferrari L.P."/>
            <person name="Ferro J.A."/>
            <person name="Ferro M.I.T."/>
            <person name="Franco G.R."/>
            <person name="Freitas N.S.A."/>
            <person name="Furlan L.R."/>
            <person name="Gazzinelli R.T."/>
            <person name="Gomes E.A."/>
            <person name="Goncalves P.R."/>
            <person name="Grangeiro T.B."/>
            <person name="Grattapaglia D."/>
            <person name="Grisard E.C."/>
            <person name="Hanna E.S."/>
            <person name="Jardim S.N."/>
            <person name="Laurino J."/>
            <person name="Leoi L.C.T."/>
            <person name="Lima L.F.A."/>
            <person name="Loureiro M.F."/>
            <person name="Lyra M.C.C.P."/>
            <person name="Madeira H.M.F."/>
            <person name="Manfio G.P."/>
            <person name="Maranhao A.Q."/>
            <person name="Martins W.S."/>
            <person name="di Mauro S.M.Z."/>
            <person name="de Medeiros S.R.B."/>
            <person name="Meissner R.V."/>
            <person name="Moreira M.A.M."/>
            <person name="Nascimento F.F."/>
            <person name="Nicolas M.F."/>
            <person name="Oliveira J.G."/>
            <person name="Oliveira S.C."/>
            <person name="Paixao R.F.C."/>
            <person name="Parente J.A."/>
            <person name="Pedrosa F.O."/>
            <person name="Pena S.D.J."/>
            <person name="Pereira J.O."/>
            <person name="Pereira M."/>
            <person name="Pinto L.S.R.C."/>
            <person name="Pinto L.S."/>
            <person name="Porto J.I.R."/>
            <person name="Potrich D.P."/>
            <person name="Ramalho-Neto C.E."/>
            <person name="Reis A.M.M."/>
            <person name="Rigo L.U."/>
            <person name="Rondinelli E."/>
            <person name="Santos E.B.P."/>
            <person name="Santos F.R."/>
            <person name="Schneider M.P.C."/>
            <person name="Seuanez H.N."/>
            <person name="Silva A.M.R."/>
            <person name="da Silva A.L.C."/>
            <person name="Silva D.W."/>
            <person name="Silva R."/>
            <person name="Simoes I.C."/>
            <person name="Simon D."/>
            <person name="Soares C.M.A."/>
            <person name="Soares R.B.A."/>
            <person name="Souza E.M."/>
            <person name="Souza K.R.L."/>
            <person name="Souza R.C."/>
            <person name="Steffens M.B.R."/>
            <person name="Steindel M."/>
            <person name="Teixeira S.R."/>
            <person name="Urmenyi T."/>
            <person name="Vettore A."/>
            <person name="Wassem R."/>
            <person name="Zaha A."/>
            <person name="Simpson A.J.G."/>
        </authorList>
    </citation>
    <scope>NUCLEOTIDE SEQUENCE [LARGE SCALE GENOMIC DNA]</scope>
    <source>
        <strain>ATCC 12472 / DSM 30191 / JCM 1249 / CCUG 213 / NBRC 12614 / NCIMB 9131 / NCTC 9757 / MK</strain>
    </source>
</reference>
<evidence type="ECO:0000255" key="1">
    <source>
        <dbReference type="HAMAP-Rule" id="MF_01716"/>
    </source>
</evidence>
<protein>
    <recommendedName>
        <fullName evidence="1">Ribose import ATP-binding protein RbsA</fullName>
        <ecNumber evidence="1">7.5.2.7</ecNumber>
    </recommendedName>
</protein>
<sequence>MQVTMRGISKAFGPVKVLENVEFTLRGGEIHALMGENGAGKSTLMKILSGVHRADAGEILLDGRKAELRSTEAAEAAGIAIIHQELNLIPQLSVMENLFLGREPSRFGIIDYAAMRREARAQLEALGAGGIDPDAEAGSLSIGQQQMVEIAKALALNARVLIMDEPTAALTEREIDRLFELMAQLRENGAAIVYVSHRMEEIFRVCDRISVLRDGCFVGEREIARTDFDEVVRMMVGREIGDRYPKREAAPGEVRLKVENLADENMIAGIGFEVRAGEVLGIAGLMGSGRSDILKTLFGAKRRTAGRVELDGKELKVAAPGDAIAAGLGFVPEDRKSKGLVLGMSLRENATLVHLDQYARLGVVSAAEEKRAVDGLIAQLRIRARDAELDVKSLSGGNQQKVVFAKWLANPPKVLLLDEPTRGVDVGGKAEIYHIVNQLAAAGTAIVMVSSELPEVLALSNRILVLHEGRQAGIFDAAGCSQETLMAAATGGAVHSETRKQA</sequence>
<dbReference type="EC" id="7.5.2.7" evidence="1"/>
<dbReference type="EMBL" id="AE016825">
    <property type="protein sequence ID" value="AAQ60687.1"/>
    <property type="molecule type" value="Genomic_DNA"/>
</dbReference>
<dbReference type="RefSeq" id="WP_011136565.1">
    <property type="nucleotide sequence ID" value="NC_005085.1"/>
</dbReference>
<dbReference type="SMR" id="Q7NTN6"/>
<dbReference type="STRING" id="243365.CV_3018"/>
<dbReference type="KEGG" id="cvi:CV_3018"/>
<dbReference type="eggNOG" id="COG1129">
    <property type="taxonomic scope" value="Bacteria"/>
</dbReference>
<dbReference type="HOGENOM" id="CLU_000604_92_3_4"/>
<dbReference type="OrthoDB" id="8573945at2"/>
<dbReference type="Proteomes" id="UP000001424">
    <property type="component" value="Chromosome"/>
</dbReference>
<dbReference type="GO" id="GO:0005886">
    <property type="term" value="C:plasma membrane"/>
    <property type="evidence" value="ECO:0007669"/>
    <property type="project" value="UniProtKB-SubCell"/>
</dbReference>
<dbReference type="GO" id="GO:0015611">
    <property type="term" value="F:ABC-type D-ribose transporter activity"/>
    <property type="evidence" value="ECO:0007669"/>
    <property type="project" value="UniProtKB-EC"/>
</dbReference>
<dbReference type="GO" id="GO:0005524">
    <property type="term" value="F:ATP binding"/>
    <property type="evidence" value="ECO:0007669"/>
    <property type="project" value="UniProtKB-KW"/>
</dbReference>
<dbReference type="GO" id="GO:0016887">
    <property type="term" value="F:ATP hydrolysis activity"/>
    <property type="evidence" value="ECO:0007669"/>
    <property type="project" value="InterPro"/>
</dbReference>
<dbReference type="CDD" id="cd03216">
    <property type="entry name" value="ABC_Carb_Monos_I"/>
    <property type="match status" value="1"/>
</dbReference>
<dbReference type="CDD" id="cd03215">
    <property type="entry name" value="ABC_Carb_Monos_II"/>
    <property type="match status" value="1"/>
</dbReference>
<dbReference type="FunFam" id="3.40.50.300:FF:000127">
    <property type="entry name" value="Ribose import ATP-binding protein RbsA"/>
    <property type="match status" value="1"/>
</dbReference>
<dbReference type="Gene3D" id="3.40.50.300">
    <property type="entry name" value="P-loop containing nucleotide triphosphate hydrolases"/>
    <property type="match status" value="2"/>
</dbReference>
<dbReference type="InterPro" id="IPR003593">
    <property type="entry name" value="AAA+_ATPase"/>
</dbReference>
<dbReference type="InterPro" id="IPR050107">
    <property type="entry name" value="ABC_carbohydrate_import_ATPase"/>
</dbReference>
<dbReference type="InterPro" id="IPR003439">
    <property type="entry name" value="ABC_transporter-like_ATP-bd"/>
</dbReference>
<dbReference type="InterPro" id="IPR017871">
    <property type="entry name" value="ABC_transporter-like_CS"/>
</dbReference>
<dbReference type="InterPro" id="IPR027417">
    <property type="entry name" value="P-loop_NTPase"/>
</dbReference>
<dbReference type="PANTHER" id="PTHR43790">
    <property type="entry name" value="CARBOHYDRATE TRANSPORT ATP-BINDING PROTEIN MG119-RELATED"/>
    <property type="match status" value="1"/>
</dbReference>
<dbReference type="PANTHER" id="PTHR43790:SF3">
    <property type="entry name" value="D-ALLOSE IMPORT ATP-BINDING PROTEIN ALSA-RELATED"/>
    <property type="match status" value="1"/>
</dbReference>
<dbReference type="Pfam" id="PF00005">
    <property type="entry name" value="ABC_tran"/>
    <property type="match status" value="2"/>
</dbReference>
<dbReference type="SMART" id="SM00382">
    <property type="entry name" value="AAA"/>
    <property type="match status" value="2"/>
</dbReference>
<dbReference type="SUPFAM" id="SSF52540">
    <property type="entry name" value="P-loop containing nucleoside triphosphate hydrolases"/>
    <property type="match status" value="2"/>
</dbReference>
<dbReference type="PROSITE" id="PS00211">
    <property type="entry name" value="ABC_TRANSPORTER_1"/>
    <property type="match status" value="1"/>
</dbReference>
<dbReference type="PROSITE" id="PS50893">
    <property type="entry name" value="ABC_TRANSPORTER_2"/>
    <property type="match status" value="2"/>
</dbReference>
<dbReference type="PROSITE" id="PS51254">
    <property type="entry name" value="RBSA"/>
    <property type="match status" value="1"/>
</dbReference>
<feature type="chain" id="PRO_0000261055" description="Ribose import ATP-binding protein RbsA">
    <location>
        <begin position="1"/>
        <end position="502"/>
    </location>
</feature>
<feature type="domain" description="ABC transporter 1" evidence="1">
    <location>
        <begin position="3"/>
        <end position="239"/>
    </location>
</feature>
<feature type="domain" description="ABC transporter 2" evidence="1">
    <location>
        <begin position="249"/>
        <end position="493"/>
    </location>
</feature>
<feature type="binding site" evidence="1">
    <location>
        <begin position="35"/>
        <end position="42"/>
    </location>
    <ligand>
        <name>ATP</name>
        <dbReference type="ChEBI" id="CHEBI:30616"/>
    </ligand>
</feature>
<accession>Q7NTN6</accession>
<name>RBSA_CHRVO</name>
<proteinExistence type="inferred from homology"/>
<comment type="function">
    <text evidence="1">Part of the ABC transporter complex RbsABC involved in ribose import. Responsible for energy coupling to the transport system.</text>
</comment>
<comment type="catalytic activity">
    <reaction evidence="1">
        <text>D-ribose(out) + ATP + H2O = D-ribose(in) + ADP + phosphate + H(+)</text>
        <dbReference type="Rhea" id="RHEA:29903"/>
        <dbReference type="ChEBI" id="CHEBI:15377"/>
        <dbReference type="ChEBI" id="CHEBI:15378"/>
        <dbReference type="ChEBI" id="CHEBI:30616"/>
        <dbReference type="ChEBI" id="CHEBI:43474"/>
        <dbReference type="ChEBI" id="CHEBI:47013"/>
        <dbReference type="ChEBI" id="CHEBI:456216"/>
        <dbReference type="EC" id="7.5.2.7"/>
    </reaction>
</comment>
<comment type="subunit">
    <text evidence="1">The complex is composed of an ATP-binding protein (RbsA), two transmembrane proteins (RbsC) and a solute-binding protein (RbsB).</text>
</comment>
<comment type="subcellular location">
    <subcellularLocation>
        <location evidence="1">Cell inner membrane</location>
        <topology evidence="1">Peripheral membrane protein</topology>
    </subcellularLocation>
</comment>
<comment type="similarity">
    <text evidence="1">Belongs to the ABC transporter superfamily. Ribose importer (TC 3.A.1.2.1) family.</text>
</comment>
<gene>
    <name evidence="1" type="primary">rbsA</name>
    <name type="ordered locus">CV_3018</name>
</gene>
<organism>
    <name type="scientific">Chromobacterium violaceum (strain ATCC 12472 / DSM 30191 / JCM 1249 / CCUG 213 / NBRC 12614 / NCIMB 9131 / NCTC 9757 / MK)</name>
    <dbReference type="NCBI Taxonomy" id="243365"/>
    <lineage>
        <taxon>Bacteria</taxon>
        <taxon>Pseudomonadati</taxon>
        <taxon>Pseudomonadota</taxon>
        <taxon>Betaproteobacteria</taxon>
        <taxon>Neisseriales</taxon>
        <taxon>Chromobacteriaceae</taxon>
        <taxon>Chromobacterium</taxon>
    </lineage>
</organism>
<keyword id="KW-0067">ATP-binding</keyword>
<keyword id="KW-0997">Cell inner membrane</keyword>
<keyword id="KW-1003">Cell membrane</keyword>
<keyword id="KW-0472">Membrane</keyword>
<keyword id="KW-0547">Nucleotide-binding</keyword>
<keyword id="KW-1185">Reference proteome</keyword>
<keyword id="KW-0677">Repeat</keyword>
<keyword id="KW-0762">Sugar transport</keyword>
<keyword id="KW-1278">Translocase</keyword>
<keyword id="KW-0813">Transport</keyword>